<proteinExistence type="inferred from homology"/>
<feature type="chain" id="PRO_1000186247" description="Thymidine phosphorylase">
    <location>
        <begin position="1"/>
        <end position="438"/>
    </location>
</feature>
<evidence type="ECO:0000255" key="1">
    <source>
        <dbReference type="HAMAP-Rule" id="MF_01628"/>
    </source>
</evidence>
<reference key="1">
    <citation type="submission" date="2008-02" db="EMBL/GenBank/DDBJ databases">
        <title>Complete sequence of chromosome 3 of Burkholderia cenocepacia MC0-3.</title>
        <authorList>
            <person name="Copeland A."/>
            <person name="Lucas S."/>
            <person name="Lapidus A."/>
            <person name="Barry K."/>
            <person name="Bruce D."/>
            <person name="Goodwin L."/>
            <person name="Glavina del Rio T."/>
            <person name="Dalin E."/>
            <person name="Tice H."/>
            <person name="Pitluck S."/>
            <person name="Chain P."/>
            <person name="Malfatti S."/>
            <person name="Shin M."/>
            <person name="Vergez L."/>
            <person name="Schmutz J."/>
            <person name="Larimer F."/>
            <person name="Land M."/>
            <person name="Hauser L."/>
            <person name="Kyrpides N."/>
            <person name="Mikhailova N."/>
            <person name="Tiedje J."/>
            <person name="Richardson P."/>
        </authorList>
    </citation>
    <scope>NUCLEOTIDE SEQUENCE [LARGE SCALE GENOMIC DNA]</scope>
    <source>
        <strain>MC0-3</strain>
    </source>
</reference>
<sequence>MFLPQEFIRRKRDGQPLDRDGMAAFVRGVTDGSVTEGQVAAFAMAVYFNDLSTDERVALTLAQRDSGDVLDWRALGLGGPVIDKHSTGGVGDVVSLMLGPMVAACGGYVPMISGRGLGHTGGTLDKLSAIPGYDVMPDTDAFRRTVREVGVAIIGQTARLAPADKRIYAIRDVTATVESVAMITASILSKKLAAGLDGLVMDVKVGSGAFMPTAEKSAELARSIVDVGNGAGMKTTAILTDMNQSLAPCAGNALEVACAIDYLTGKSRPARLHDVTMALSAELLVTGGLARDAAHAREKLQQALDSGAAAERFARMVVALGGPADLLDAPARHLARAAVIVPVPAPASGVVQRVDCRALGLAVVALGGGRTRAEDAIDVSVGLSALAEIGQRIESGEPLGFVHARDEAAAAHAADAIRRGYVLGDTGEAPPTLYRQIG</sequence>
<protein>
    <recommendedName>
        <fullName evidence="1">Thymidine phosphorylase</fullName>
        <ecNumber evidence="1">2.4.2.4</ecNumber>
    </recommendedName>
    <alternativeName>
        <fullName evidence="1">TdRPase</fullName>
    </alternativeName>
</protein>
<comment type="function">
    <text evidence="1">The enzymes which catalyze the reversible phosphorolysis of pyrimidine nucleosides are involved in the degradation of these compounds and in their utilization as carbon and energy sources, or in the rescue of pyrimidine bases for nucleotide synthesis.</text>
</comment>
<comment type="catalytic activity">
    <reaction evidence="1">
        <text>thymidine + phosphate = 2-deoxy-alpha-D-ribose 1-phosphate + thymine</text>
        <dbReference type="Rhea" id="RHEA:16037"/>
        <dbReference type="ChEBI" id="CHEBI:17748"/>
        <dbReference type="ChEBI" id="CHEBI:17821"/>
        <dbReference type="ChEBI" id="CHEBI:43474"/>
        <dbReference type="ChEBI" id="CHEBI:57259"/>
        <dbReference type="EC" id="2.4.2.4"/>
    </reaction>
</comment>
<comment type="pathway">
    <text evidence="1">Pyrimidine metabolism; dTMP biosynthesis via salvage pathway; dTMP from thymine: step 1/2.</text>
</comment>
<comment type="subunit">
    <text evidence="1">Homodimer.</text>
</comment>
<comment type="similarity">
    <text evidence="1">Belongs to the thymidine/pyrimidine-nucleoside phosphorylase family.</text>
</comment>
<dbReference type="EC" id="2.4.2.4" evidence="1"/>
<dbReference type="EMBL" id="CP000960">
    <property type="protein sequence ID" value="ACA95830.1"/>
    <property type="molecule type" value="Genomic_DNA"/>
</dbReference>
<dbReference type="RefSeq" id="WP_012337200.1">
    <property type="nucleotide sequence ID" value="NC_010512.1"/>
</dbReference>
<dbReference type="SMR" id="B1KC83"/>
<dbReference type="GeneID" id="83053352"/>
<dbReference type="KEGG" id="bcm:Bcenmc03_6716"/>
<dbReference type="HOGENOM" id="CLU_025040_0_1_4"/>
<dbReference type="UniPathway" id="UPA00578">
    <property type="reaction ID" value="UER00638"/>
</dbReference>
<dbReference type="Proteomes" id="UP000002169">
    <property type="component" value="Chromosome 3"/>
</dbReference>
<dbReference type="GO" id="GO:0005829">
    <property type="term" value="C:cytosol"/>
    <property type="evidence" value="ECO:0007669"/>
    <property type="project" value="TreeGrafter"/>
</dbReference>
<dbReference type="GO" id="GO:0004645">
    <property type="term" value="F:1,4-alpha-oligoglucan phosphorylase activity"/>
    <property type="evidence" value="ECO:0007669"/>
    <property type="project" value="InterPro"/>
</dbReference>
<dbReference type="GO" id="GO:0009032">
    <property type="term" value="F:thymidine phosphorylase activity"/>
    <property type="evidence" value="ECO:0007669"/>
    <property type="project" value="UniProtKB-UniRule"/>
</dbReference>
<dbReference type="GO" id="GO:0006206">
    <property type="term" value="P:pyrimidine nucleobase metabolic process"/>
    <property type="evidence" value="ECO:0007669"/>
    <property type="project" value="InterPro"/>
</dbReference>
<dbReference type="GO" id="GO:0046104">
    <property type="term" value="P:thymidine metabolic process"/>
    <property type="evidence" value="ECO:0007669"/>
    <property type="project" value="UniProtKB-UniRule"/>
</dbReference>
<dbReference type="FunFam" id="3.40.1030.10:FF:000001">
    <property type="entry name" value="Thymidine phosphorylase"/>
    <property type="match status" value="1"/>
</dbReference>
<dbReference type="Gene3D" id="3.40.1030.10">
    <property type="entry name" value="Nucleoside phosphorylase/phosphoribosyltransferase catalytic domain"/>
    <property type="match status" value="1"/>
</dbReference>
<dbReference type="Gene3D" id="3.90.1170.30">
    <property type="entry name" value="Pyrimidine nucleoside phosphorylase-like, C-terminal domain"/>
    <property type="match status" value="1"/>
</dbReference>
<dbReference type="Gene3D" id="1.20.970.10">
    <property type="entry name" value="Transferase, Pyrimidine Nucleoside Phosphorylase, Chain C"/>
    <property type="match status" value="1"/>
</dbReference>
<dbReference type="HAMAP" id="MF_01628">
    <property type="entry name" value="Thymid_phosp"/>
    <property type="match status" value="1"/>
</dbReference>
<dbReference type="InterPro" id="IPR000312">
    <property type="entry name" value="Glycosyl_Trfase_fam3"/>
</dbReference>
<dbReference type="InterPro" id="IPR017459">
    <property type="entry name" value="Glycosyl_Trfase_fam3_N_dom"/>
</dbReference>
<dbReference type="InterPro" id="IPR036320">
    <property type="entry name" value="Glycosyl_Trfase_fam3_N_dom_sf"/>
</dbReference>
<dbReference type="InterPro" id="IPR035902">
    <property type="entry name" value="Nuc_phospho_transferase"/>
</dbReference>
<dbReference type="InterPro" id="IPR036566">
    <property type="entry name" value="PYNP-like_C_sf"/>
</dbReference>
<dbReference type="InterPro" id="IPR013102">
    <property type="entry name" value="PYNP_C"/>
</dbReference>
<dbReference type="InterPro" id="IPR018090">
    <property type="entry name" value="Pyrmidine_PPas_bac/euk"/>
</dbReference>
<dbReference type="InterPro" id="IPR017872">
    <property type="entry name" value="Pyrmidine_PPase_CS"/>
</dbReference>
<dbReference type="InterPro" id="IPR000053">
    <property type="entry name" value="Thymidine/pyrmidine_PPase"/>
</dbReference>
<dbReference type="InterPro" id="IPR013465">
    <property type="entry name" value="Thymidine_Pase"/>
</dbReference>
<dbReference type="NCBIfam" id="NF004490">
    <property type="entry name" value="PRK05820.1"/>
    <property type="match status" value="1"/>
</dbReference>
<dbReference type="NCBIfam" id="TIGR02643">
    <property type="entry name" value="T_phosphoryl"/>
    <property type="match status" value="1"/>
</dbReference>
<dbReference type="NCBIfam" id="TIGR02644">
    <property type="entry name" value="Y_phosphoryl"/>
    <property type="match status" value="1"/>
</dbReference>
<dbReference type="PANTHER" id="PTHR10515">
    <property type="entry name" value="THYMIDINE PHOSPHORYLASE"/>
    <property type="match status" value="1"/>
</dbReference>
<dbReference type="PANTHER" id="PTHR10515:SF0">
    <property type="entry name" value="THYMIDINE PHOSPHORYLASE"/>
    <property type="match status" value="1"/>
</dbReference>
<dbReference type="Pfam" id="PF02885">
    <property type="entry name" value="Glycos_trans_3N"/>
    <property type="match status" value="1"/>
</dbReference>
<dbReference type="Pfam" id="PF00591">
    <property type="entry name" value="Glycos_transf_3"/>
    <property type="match status" value="1"/>
</dbReference>
<dbReference type="Pfam" id="PF07831">
    <property type="entry name" value="PYNP_C"/>
    <property type="match status" value="1"/>
</dbReference>
<dbReference type="PIRSF" id="PIRSF000478">
    <property type="entry name" value="TP_PyNP"/>
    <property type="match status" value="1"/>
</dbReference>
<dbReference type="SMART" id="SM00941">
    <property type="entry name" value="PYNP_C"/>
    <property type="match status" value="1"/>
</dbReference>
<dbReference type="SUPFAM" id="SSF52418">
    <property type="entry name" value="Nucleoside phosphorylase/phosphoribosyltransferase catalytic domain"/>
    <property type="match status" value="1"/>
</dbReference>
<dbReference type="SUPFAM" id="SSF47648">
    <property type="entry name" value="Nucleoside phosphorylase/phosphoribosyltransferase N-terminal domain"/>
    <property type="match status" value="1"/>
</dbReference>
<dbReference type="SUPFAM" id="SSF54680">
    <property type="entry name" value="Pyrimidine nucleoside phosphorylase C-terminal domain"/>
    <property type="match status" value="1"/>
</dbReference>
<dbReference type="PROSITE" id="PS00647">
    <property type="entry name" value="THYMID_PHOSPHORYLASE"/>
    <property type="match status" value="1"/>
</dbReference>
<gene>
    <name evidence="1" type="primary">deoA</name>
    <name type="ordered locus">Bcenmc03_6716</name>
</gene>
<keyword id="KW-0328">Glycosyltransferase</keyword>
<keyword id="KW-0808">Transferase</keyword>
<name>TYPH_BURO0</name>
<accession>B1KC83</accession>
<organism>
    <name type="scientific">Burkholderia orbicola (strain MC0-3)</name>
    <dbReference type="NCBI Taxonomy" id="406425"/>
    <lineage>
        <taxon>Bacteria</taxon>
        <taxon>Pseudomonadati</taxon>
        <taxon>Pseudomonadota</taxon>
        <taxon>Betaproteobacteria</taxon>
        <taxon>Burkholderiales</taxon>
        <taxon>Burkholderiaceae</taxon>
        <taxon>Burkholderia</taxon>
        <taxon>Burkholderia cepacia complex</taxon>
        <taxon>Burkholderia orbicola</taxon>
    </lineage>
</organism>